<evidence type="ECO:0000255" key="1">
    <source>
        <dbReference type="HAMAP-Rule" id="MF_00690"/>
    </source>
</evidence>
<dbReference type="EMBL" id="CP000036">
    <property type="protein sequence ID" value="ABB67822.1"/>
    <property type="molecule type" value="Genomic_DNA"/>
</dbReference>
<dbReference type="RefSeq" id="WP_000907085.1">
    <property type="nucleotide sequence ID" value="NC_007613.1"/>
</dbReference>
<dbReference type="SMR" id="Q31VT6"/>
<dbReference type="KEGG" id="sbo:SBO_3334"/>
<dbReference type="HOGENOM" id="CLU_186759_1_0_6"/>
<dbReference type="Proteomes" id="UP000007067">
    <property type="component" value="Chromosome"/>
</dbReference>
<dbReference type="Gene3D" id="1.10.10.610">
    <property type="entry name" value="YehU-like"/>
    <property type="match status" value="1"/>
</dbReference>
<dbReference type="HAMAP" id="MF_00690">
    <property type="entry name" value="UPF0270"/>
    <property type="match status" value="1"/>
</dbReference>
<dbReference type="InterPro" id="IPR010648">
    <property type="entry name" value="UPF0270"/>
</dbReference>
<dbReference type="InterPro" id="IPR036685">
    <property type="entry name" value="YehU-like_sf"/>
</dbReference>
<dbReference type="NCBIfam" id="NF003438">
    <property type="entry name" value="PRK04966.1"/>
    <property type="match status" value="1"/>
</dbReference>
<dbReference type="Pfam" id="PF06794">
    <property type="entry name" value="UPF0270"/>
    <property type="match status" value="1"/>
</dbReference>
<dbReference type="PIRSF" id="PIRSF006169">
    <property type="entry name" value="UCP006169"/>
    <property type="match status" value="1"/>
</dbReference>
<dbReference type="SUPFAM" id="SSF118001">
    <property type="entry name" value="YehU-like"/>
    <property type="match status" value="1"/>
</dbReference>
<name>YHEU_SHIBS</name>
<gene>
    <name evidence="1" type="primary">yheU</name>
    <name type="ordered locus">SBO_3334</name>
</gene>
<feature type="chain" id="PRO_1000045174" description="UPF0270 protein YheU">
    <location>
        <begin position="1"/>
        <end position="72"/>
    </location>
</feature>
<comment type="similarity">
    <text evidence="1">Belongs to the UPF0270 family.</text>
</comment>
<accession>Q31VT6</accession>
<organism>
    <name type="scientific">Shigella boydii serotype 4 (strain Sb227)</name>
    <dbReference type="NCBI Taxonomy" id="300268"/>
    <lineage>
        <taxon>Bacteria</taxon>
        <taxon>Pseudomonadati</taxon>
        <taxon>Pseudomonadota</taxon>
        <taxon>Gammaproteobacteria</taxon>
        <taxon>Enterobacterales</taxon>
        <taxon>Enterobacteriaceae</taxon>
        <taxon>Shigella</taxon>
    </lineage>
</organism>
<protein>
    <recommendedName>
        <fullName evidence="1">UPF0270 protein YheU</fullName>
    </recommendedName>
</protein>
<proteinExistence type="inferred from homology"/>
<reference key="1">
    <citation type="journal article" date="2005" name="Nucleic Acids Res.">
        <title>Genome dynamics and diversity of Shigella species, the etiologic agents of bacillary dysentery.</title>
        <authorList>
            <person name="Yang F."/>
            <person name="Yang J."/>
            <person name="Zhang X."/>
            <person name="Chen L."/>
            <person name="Jiang Y."/>
            <person name="Yan Y."/>
            <person name="Tang X."/>
            <person name="Wang J."/>
            <person name="Xiong Z."/>
            <person name="Dong J."/>
            <person name="Xue Y."/>
            <person name="Zhu Y."/>
            <person name="Xu X."/>
            <person name="Sun L."/>
            <person name="Chen S."/>
            <person name="Nie H."/>
            <person name="Peng J."/>
            <person name="Xu J."/>
            <person name="Wang Y."/>
            <person name="Yuan Z."/>
            <person name="Wen Y."/>
            <person name="Yao Z."/>
            <person name="Shen Y."/>
            <person name="Qiang B."/>
            <person name="Hou Y."/>
            <person name="Yu J."/>
            <person name="Jin Q."/>
        </authorList>
    </citation>
    <scope>NUCLEOTIDE SEQUENCE [LARGE SCALE GENOMIC DNA]</scope>
    <source>
        <strain>Sb227</strain>
    </source>
</reference>
<sequence length="72" mass="8470">MLIPWQDLSPETLENLIESFVLREGTDYGEHERTLEQKVADVKRQLQCGEAVLVWSELHETVNIMPRSQFRE</sequence>